<name>ITPA_MAIZE</name>
<evidence type="ECO:0000255" key="1">
    <source>
        <dbReference type="HAMAP-Rule" id="MF_03148"/>
    </source>
</evidence>
<proteinExistence type="evidence at transcript level"/>
<organism>
    <name type="scientific">Zea mays</name>
    <name type="common">Maize</name>
    <dbReference type="NCBI Taxonomy" id="4577"/>
    <lineage>
        <taxon>Eukaryota</taxon>
        <taxon>Viridiplantae</taxon>
        <taxon>Streptophyta</taxon>
        <taxon>Embryophyta</taxon>
        <taxon>Tracheophyta</taxon>
        <taxon>Spermatophyta</taxon>
        <taxon>Magnoliopsida</taxon>
        <taxon>Liliopsida</taxon>
        <taxon>Poales</taxon>
        <taxon>Poaceae</taxon>
        <taxon>PACMAD clade</taxon>
        <taxon>Panicoideae</taxon>
        <taxon>Andropogonodae</taxon>
        <taxon>Andropogoneae</taxon>
        <taxon>Tripsacinae</taxon>
        <taxon>Zea</taxon>
    </lineage>
</organism>
<comment type="function">
    <text evidence="1">Pyrophosphatase that hydrolyzes non-canonical purine nucleotides such as inosine triphosphate (ITP), deoxyinosine triphosphate (dITP) or xanthosine 5'-triphosphate (XTP) to their respective monophosphate derivatives. The enzyme does not distinguish between the deoxy- and ribose forms. Probably excludes non-canonical purines from RNA and DNA precursor pools, thus preventing their incorporation into RNA and DNA and avoiding chromosomal lesions.</text>
</comment>
<comment type="catalytic activity">
    <reaction evidence="1">
        <text>ITP + H2O = IMP + diphosphate + H(+)</text>
        <dbReference type="Rhea" id="RHEA:29399"/>
        <dbReference type="ChEBI" id="CHEBI:15377"/>
        <dbReference type="ChEBI" id="CHEBI:15378"/>
        <dbReference type="ChEBI" id="CHEBI:33019"/>
        <dbReference type="ChEBI" id="CHEBI:58053"/>
        <dbReference type="ChEBI" id="CHEBI:61402"/>
        <dbReference type="EC" id="3.6.1.66"/>
    </reaction>
    <physiologicalReaction direction="left-to-right" evidence="1">
        <dbReference type="Rhea" id="RHEA:29400"/>
    </physiologicalReaction>
</comment>
<comment type="catalytic activity">
    <reaction evidence="1">
        <text>dITP + H2O = dIMP + diphosphate + H(+)</text>
        <dbReference type="Rhea" id="RHEA:28342"/>
        <dbReference type="ChEBI" id="CHEBI:15377"/>
        <dbReference type="ChEBI" id="CHEBI:15378"/>
        <dbReference type="ChEBI" id="CHEBI:33019"/>
        <dbReference type="ChEBI" id="CHEBI:61194"/>
        <dbReference type="ChEBI" id="CHEBI:61382"/>
        <dbReference type="EC" id="3.6.1.66"/>
    </reaction>
    <physiologicalReaction direction="left-to-right" evidence="1">
        <dbReference type="Rhea" id="RHEA:28343"/>
    </physiologicalReaction>
</comment>
<comment type="catalytic activity">
    <reaction evidence="1">
        <text>XTP + H2O = XMP + diphosphate + H(+)</text>
        <dbReference type="Rhea" id="RHEA:28610"/>
        <dbReference type="ChEBI" id="CHEBI:15377"/>
        <dbReference type="ChEBI" id="CHEBI:15378"/>
        <dbReference type="ChEBI" id="CHEBI:33019"/>
        <dbReference type="ChEBI" id="CHEBI:57464"/>
        <dbReference type="ChEBI" id="CHEBI:61314"/>
        <dbReference type="EC" id="3.6.1.66"/>
    </reaction>
    <physiologicalReaction direction="left-to-right" evidence="1">
        <dbReference type="Rhea" id="RHEA:28611"/>
    </physiologicalReaction>
</comment>
<comment type="cofactor">
    <cofactor evidence="1">
        <name>Mg(2+)</name>
        <dbReference type="ChEBI" id="CHEBI:18420"/>
    </cofactor>
    <cofactor evidence="1">
        <name>Mn(2+)</name>
        <dbReference type="ChEBI" id="CHEBI:29035"/>
    </cofactor>
    <text evidence="1">Binds 1 divalent metal cation per subunit; can use either Mg(2+) or Mn(2+).</text>
</comment>
<comment type="subunit">
    <text evidence="1">Homodimer.</text>
</comment>
<comment type="subcellular location">
    <subcellularLocation>
        <location evidence="1">Cytoplasm</location>
    </subcellularLocation>
</comment>
<comment type="similarity">
    <text evidence="1">Belongs to the HAM1 NTPase family.</text>
</comment>
<accession>B6TNW8</accession>
<dbReference type="EC" id="3.6.1.66" evidence="1"/>
<dbReference type="EMBL" id="EU966683">
    <property type="protein sequence ID" value="ACG38801.1"/>
    <property type="molecule type" value="mRNA"/>
</dbReference>
<dbReference type="RefSeq" id="NP_001150363.1">
    <property type="nucleotide sequence ID" value="NM_001156891.1"/>
</dbReference>
<dbReference type="SMR" id="B6TNW8"/>
<dbReference type="FunCoup" id="B6TNW8">
    <property type="interactions" value="2714"/>
</dbReference>
<dbReference type="STRING" id="4577.B6TNW8"/>
<dbReference type="PaxDb" id="4577-GRMZM2G020295_P02"/>
<dbReference type="EnsemblPlants" id="Zm00001eb046670_T001">
    <property type="protein sequence ID" value="Zm00001eb046670_P001"/>
    <property type="gene ID" value="Zm00001eb046670"/>
</dbReference>
<dbReference type="GeneID" id="100283993"/>
<dbReference type="Gramene" id="Zm00001eb046670_T001">
    <property type="protein sequence ID" value="Zm00001eb046670_P001"/>
    <property type="gene ID" value="Zm00001eb046670"/>
</dbReference>
<dbReference type="KEGG" id="zma:100283993"/>
<dbReference type="eggNOG" id="KOG3222">
    <property type="taxonomic scope" value="Eukaryota"/>
</dbReference>
<dbReference type="HOGENOM" id="CLU_082080_1_1_1"/>
<dbReference type="InParanoid" id="B6TNW8"/>
<dbReference type="OrthoDB" id="6288734at2759"/>
<dbReference type="Proteomes" id="UP000007305">
    <property type="component" value="Chromosome 1"/>
</dbReference>
<dbReference type="ExpressionAtlas" id="B6TNW8">
    <property type="expression patterns" value="baseline and differential"/>
</dbReference>
<dbReference type="GO" id="GO:0005737">
    <property type="term" value="C:cytoplasm"/>
    <property type="evidence" value="ECO:0000318"/>
    <property type="project" value="GO_Central"/>
</dbReference>
<dbReference type="GO" id="GO:0035870">
    <property type="term" value="F:dITP diphosphatase activity"/>
    <property type="evidence" value="ECO:0007669"/>
    <property type="project" value="RHEA"/>
</dbReference>
<dbReference type="GO" id="GO:0036220">
    <property type="term" value="F:ITP diphosphatase activity"/>
    <property type="evidence" value="ECO:0007669"/>
    <property type="project" value="RHEA"/>
</dbReference>
<dbReference type="GO" id="GO:0046872">
    <property type="term" value="F:metal ion binding"/>
    <property type="evidence" value="ECO:0007669"/>
    <property type="project" value="UniProtKB-KW"/>
</dbReference>
<dbReference type="GO" id="GO:0047429">
    <property type="term" value="F:nucleoside triphosphate diphosphatase activity"/>
    <property type="evidence" value="ECO:0000318"/>
    <property type="project" value="GO_Central"/>
</dbReference>
<dbReference type="GO" id="GO:0000166">
    <property type="term" value="F:nucleotide binding"/>
    <property type="evidence" value="ECO:0007669"/>
    <property type="project" value="UniProtKB-KW"/>
</dbReference>
<dbReference type="GO" id="GO:0036222">
    <property type="term" value="F:XTP diphosphatase activity"/>
    <property type="evidence" value="ECO:0007669"/>
    <property type="project" value="RHEA"/>
</dbReference>
<dbReference type="GO" id="GO:0009204">
    <property type="term" value="P:deoxyribonucleoside triphosphate catabolic process"/>
    <property type="evidence" value="ECO:0007669"/>
    <property type="project" value="UniProtKB-UniRule"/>
</dbReference>
<dbReference type="GO" id="GO:0009143">
    <property type="term" value="P:nucleoside triphosphate catabolic process"/>
    <property type="evidence" value="ECO:0000318"/>
    <property type="project" value="GO_Central"/>
</dbReference>
<dbReference type="GO" id="GO:0009117">
    <property type="term" value="P:nucleotide metabolic process"/>
    <property type="evidence" value="ECO:0007669"/>
    <property type="project" value="UniProtKB-KW"/>
</dbReference>
<dbReference type="CDD" id="cd00515">
    <property type="entry name" value="HAM1"/>
    <property type="match status" value="1"/>
</dbReference>
<dbReference type="FunFam" id="3.90.950.10:FF:000003">
    <property type="entry name" value="Inosine triphosphate pyrophosphatase"/>
    <property type="match status" value="1"/>
</dbReference>
<dbReference type="Gene3D" id="3.90.950.10">
    <property type="match status" value="1"/>
</dbReference>
<dbReference type="HAMAP" id="MF_03148">
    <property type="entry name" value="HAM1_NTPase"/>
    <property type="match status" value="1"/>
</dbReference>
<dbReference type="InterPro" id="IPR027502">
    <property type="entry name" value="ITPase"/>
</dbReference>
<dbReference type="InterPro" id="IPR029001">
    <property type="entry name" value="ITPase-like_fam"/>
</dbReference>
<dbReference type="InterPro" id="IPR002637">
    <property type="entry name" value="RdgB/HAM1"/>
</dbReference>
<dbReference type="PANTHER" id="PTHR11067:SF9">
    <property type="entry name" value="INOSINE TRIPHOSPHATE PYROPHOSPHATASE"/>
    <property type="match status" value="1"/>
</dbReference>
<dbReference type="PANTHER" id="PTHR11067">
    <property type="entry name" value="INOSINE TRIPHOSPHATE PYROPHOSPHATASE/HAM1 PROTEIN"/>
    <property type="match status" value="1"/>
</dbReference>
<dbReference type="Pfam" id="PF01725">
    <property type="entry name" value="Ham1p_like"/>
    <property type="match status" value="1"/>
</dbReference>
<dbReference type="SUPFAM" id="SSF52972">
    <property type="entry name" value="ITPase-like"/>
    <property type="match status" value="1"/>
</dbReference>
<keyword id="KW-0963">Cytoplasm</keyword>
<keyword id="KW-0378">Hydrolase</keyword>
<keyword id="KW-0460">Magnesium</keyword>
<keyword id="KW-0464">Manganese</keyword>
<keyword id="KW-0479">Metal-binding</keyword>
<keyword id="KW-0546">Nucleotide metabolism</keyword>
<keyword id="KW-0547">Nucleotide-binding</keyword>
<keyword id="KW-1185">Reference proteome</keyword>
<protein>
    <recommendedName>
        <fullName evidence="1">Inosine triphosphate pyrophosphatase</fullName>
        <shortName evidence="1">ITPase</shortName>
        <shortName evidence="1">Inosine triphosphatase</shortName>
        <ecNumber evidence="1">3.6.1.66</ecNumber>
    </recommendedName>
    <alternativeName>
        <fullName evidence="1">Non-canonical purine NTP pyrophosphatase</fullName>
    </alternativeName>
    <alternativeName>
        <fullName evidence="1">Non-standard purine NTP pyrophosphatase</fullName>
    </alternativeName>
    <alternativeName>
        <fullName evidence="1">Nucleoside-triphosphate diphosphatase</fullName>
    </alternativeName>
    <alternativeName>
        <fullName evidence="1">Nucleoside-triphosphate pyrophosphatase</fullName>
        <shortName evidence="1">NTPase</shortName>
    </alternativeName>
    <alternativeName>
        <fullName evidence="1">XTP/dITP diphosphatase</fullName>
    </alternativeName>
</protein>
<sequence length="201" mass="21835">MSAAARVLPKAVTFVTGNAKKLEEVRAILGSSVPFQSLKLDLPELQGEPEYISKEKARIAASQVNGPVLVEDTCLCFNALKGLPGPYIKWFLEKIGHEGLNNLLKAYEDKSAFAMCIFSLALGPGEEPITFVGKTAGKIVPARGPNYFGWDPVFQPDGFEQTYAEMPKSVKNNISHRGKALALVKEHFASASYTVQSNDST</sequence>
<reference key="1">
    <citation type="journal article" date="2009" name="Plant Mol. Biol.">
        <title>Insights into corn genes derived from large-scale cDNA sequencing.</title>
        <authorList>
            <person name="Alexandrov N.N."/>
            <person name="Brover V.V."/>
            <person name="Freidin S."/>
            <person name="Troukhan M.E."/>
            <person name="Tatarinova T.V."/>
            <person name="Zhang H."/>
            <person name="Swaller T.J."/>
            <person name="Lu Y.-P."/>
            <person name="Bouck J."/>
            <person name="Flavell R.B."/>
            <person name="Feldmann K.A."/>
        </authorList>
    </citation>
    <scope>NUCLEOTIDE SEQUENCE [LARGE SCALE MRNA]</scope>
</reference>
<feature type="chain" id="PRO_0000413120" description="Inosine triphosphate pyrophosphatase">
    <location>
        <begin position="1"/>
        <end position="201"/>
    </location>
</feature>
<feature type="binding site" evidence="1">
    <location>
        <begin position="16"/>
        <end position="21"/>
    </location>
    <ligand>
        <name>ITP</name>
        <dbReference type="ChEBI" id="CHEBI:61402"/>
    </ligand>
</feature>
<feature type="binding site" evidence="1">
    <location>
        <position position="44"/>
    </location>
    <ligand>
        <name>Mg(2+)</name>
        <dbReference type="ChEBI" id="CHEBI:18420"/>
    </ligand>
</feature>
<feature type="binding site" evidence="1">
    <location>
        <position position="56"/>
    </location>
    <ligand>
        <name>ITP</name>
        <dbReference type="ChEBI" id="CHEBI:61402"/>
    </ligand>
</feature>
<feature type="binding site" evidence="1">
    <location>
        <begin position="72"/>
        <end position="73"/>
    </location>
    <ligand>
        <name>ITP</name>
        <dbReference type="ChEBI" id="CHEBI:61402"/>
    </ligand>
</feature>
<feature type="binding site" evidence="1">
    <location>
        <position position="89"/>
    </location>
    <ligand>
        <name>ITP</name>
        <dbReference type="ChEBI" id="CHEBI:61402"/>
    </ligand>
</feature>
<feature type="binding site" evidence="1">
    <location>
        <begin position="148"/>
        <end position="151"/>
    </location>
    <ligand>
        <name>ITP</name>
        <dbReference type="ChEBI" id="CHEBI:61402"/>
    </ligand>
</feature>
<feature type="binding site" evidence="1">
    <location>
        <position position="171"/>
    </location>
    <ligand>
        <name>ITP</name>
        <dbReference type="ChEBI" id="CHEBI:61402"/>
    </ligand>
</feature>
<feature type="binding site" evidence="1">
    <location>
        <begin position="176"/>
        <end position="177"/>
    </location>
    <ligand>
        <name>ITP</name>
        <dbReference type="ChEBI" id="CHEBI:61402"/>
    </ligand>
</feature>